<accession>Q89AU4</accession>
<reference key="1">
    <citation type="journal article" date="2003" name="Proc. Natl. Acad. Sci. U.S.A.">
        <title>Reductive genome evolution in Buchnera aphidicola.</title>
        <authorList>
            <person name="van Ham R.C.H.J."/>
            <person name="Kamerbeek J."/>
            <person name="Palacios C."/>
            <person name="Rausell C."/>
            <person name="Abascal F."/>
            <person name="Bastolla U."/>
            <person name="Fernandez J.M."/>
            <person name="Jimenez L."/>
            <person name="Postigo M."/>
            <person name="Silva F.J."/>
            <person name="Tamames J."/>
            <person name="Viguera E."/>
            <person name="Latorre A."/>
            <person name="Valencia A."/>
            <person name="Moran F."/>
            <person name="Moya A."/>
        </authorList>
    </citation>
    <scope>NUCLEOTIDE SEQUENCE [LARGE SCALE GENOMIC DNA]</scope>
    <source>
        <strain>Bp</strain>
    </source>
</reference>
<protein>
    <recommendedName>
        <fullName evidence="1">NADH-quinone oxidoreductase subunit C/D</fullName>
        <ecNumber evidence="1">7.1.1.-</ecNumber>
    </recommendedName>
    <alternativeName>
        <fullName evidence="1">NADH dehydrogenase I subunit C/D</fullName>
    </alternativeName>
    <alternativeName>
        <fullName evidence="1">NDH-1 subunit C/D</fullName>
    </alternativeName>
</protein>
<dbReference type="EC" id="7.1.1.-" evidence="1"/>
<dbReference type="EMBL" id="AE016826">
    <property type="protein sequence ID" value="AAO26879.1"/>
    <property type="molecule type" value="Genomic_DNA"/>
</dbReference>
<dbReference type="RefSeq" id="WP_011091280.1">
    <property type="nucleotide sequence ID" value="NC_004545.1"/>
</dbReference>
<dbReference type="SMR" id="Q89AU4"/>
<dbReference type="STRING" id="224915.bbp_145"/>
<dbReference type="KEGG" id="bab:bbp_145"/>
<dbReference type="eggNOG" id="COG0649">
    <property type="taxonomic scope" value="Bacteria"/>
</dbReference>
<dbReference type="HOGENOM" id="CLU_015134_3_2_6"/>
<dbReference type="OrthoDB" id="9801496at2"/>
<dbReference type="Proteomes" id="UP000000601">
    <property type="component" value="Chromosome"/>
</dbReference>
<dbReference type="GO" id="GO:0030964">
    <property type="term" value="C:NADH dehydrogenase complex"/>
    <property type="evidence" value="ECO:0007669"/>
    <property type="project" value="InterPro"/>
</dbReference>
<dbReference type="GO" id="GO:0005886">
    <property type="term" value="C:plasma membrane"/>
    <property type="evidence" value="ECO:0007669"/>
    <property type="project" value="UniProtKB-SubCell"/>
</dbReference>
<dbReference type="GO" id="GO:0051287">
    <property type="term" value="F:NAD binding"/>
    <property type="evidence" value="ECO:0007669"/>
    <property type="project" value="InterPro"/>
</dbReference>
<dbReference type="GO" id="GO:0008137">
    <property type="term" value="F:NADH dehydrogenase (ubiquinone) activity"/>
    <property type="evidence" value="ECO:0007669"/>
    <property type="project" value="InterPro"/>
</dbReference>
<dbReference type="GO" id="GO:0050136">
    <property type="term" value="F:NADH:ubiquinone reductase (non-electrogenic) activity"/>
    <property type="evidence" value="ECO:0007669"/>
    <property type="project" value="UniProtKB-UniRule"/>
</dbReference>
<dbReference type="GO" id="GO:0048038">
    <property type="term" value="F:quinone binding"/>
    <property type="evidence" value="ECO:0007669"/>
    <property type="project" value="UniProtKB-KW"/>
</dbReference>
<dbReference type="FunFam" id="1.10.645.10:FF:000001">
    <property type="entry name" value="NADH-quinone oxidoreductase subunit C/D"/>
    <property type="match status" value="1"/>
</dbReference>
<dbReference type="Gene3D" id="1.10.645.10">
    <property type="entry name" value="Cytochrome-c3 Hydrogenase, chain B"/>
    <property type="match status" value="1"/>
</dbReference>
<dbReference type="Gene3D" id="3.30.460.80">
    <property type="entry name" value="NADH:ubiquinone oxidoreductase, 30kDa subunit"/>
    <property type="match status" value="1"/>
</dbReference>
<dbReference type="HAMAP" id="MF_01359">
    <property type="entry name" value="NDH1_NuoCD_1"/>
    <property type="match status" value="1"/>
</dbReference>
<dbReference type="HAMAP" id="MF_01358">
    <property type="entry name" value="NDH1_NuoD"/>
    <property type="match status" value="1"/>
</dbReference>
<dbReference type="InterPro" id="IPR010218">
    <property type="entry name" value="NADH_DH_suC"/>
</dbReference>
<dbReference type="InterPro" id="IPR023062">
    <property type="entry name" value="NADH_DH_suCD"/>
</dbReference>
<dbReference type="InterPro" id="IPR001135">
    <property type="entry name" value="NADH_Q_OxRdtase_suD"/>
</dbReference>
<dbReference type="InterPro" id="IPR037232">
    <property type="entry name" value="NADH_quin_OxRdtase_su_C/D-like"/>
</dbReference>
<dbReference type="InterPro" id="IPR001268">
    <property type="entry name" value="NADH_UbQ_OxRdtase_30kDa_su"/>
</dbReference>
<dbReference type="InterPro" id="IPR014029">
    <property type="entry name" value="NADH_UbQ_OxRdtase_49kDa_CS"/>
</dbReference>
<dbReference type="InterPro" id="IPR022885">
    <property type="entry name" value="NDH1_su_D/H"/>
</dbReference>
<dbReference type="InterPro" id="IPR029014">
    <property type="entry name" value="NiFe-Hase_large"/>
</dbReference>
<dbReference type="NCBIfam" id="TIGR01961">
    <property type="entry name" value="NuoC_fam"/>
    <property type="match status" value="1"/>
</dbReference>
<dbReference type="NCBIfam" id="TIGR01962">
    <property type="entry name" value="NuoD"/>
    <property type="match status" value="1"/>
</dbReference>
<dbReference type="NCBIfam" id="NF004739">
    <property type="entry name" value="PRK06075.1"/>
    <property type="match status" value="1"/>
</dbReference>
<dbReference type="NCBIfam" id="NF008728">
    <property type="entry name" value="PRK11742.1"/>
    <property type="match status" value="1"/>
</dbReference>
<dbReference type="PANTHER" id="PTHR11993:SF45">
    <property type="entry name" value="NADH-QUINONE OXIDOREDUCTASE SUBUNIT C_D"/>
    <property type="match status" value="1"/>
</dbReference>
<dbReference type="PANTHER" id="PTHR11993">
    <property type="entry name" value="NADH-UBIQUINONE OXIDOREDUCTASE 49 KDA SUBUNIT"/>
    <property type="match status" value="1"/>
</dbReference>
<dbReference type="Pfam" id="PF00329">
    <property type="entry name" value="Complex1_30kDa"/>
    <property type="match status" value="1"/>
</dbReference>
<dbReference type="Pfam" id="PF00346">
    <property type="entry name" value="Complex1_49kDa"/>
    <property type="match status" value="1"/>
</dbReference>
<dbReference type="SUPFAM" id="SSF56762">
    <property type="entry name" value="HydB/Nqo4-like"/>
    <property type="match status" value="1"/>
</dbReference>
<dbReference type="SUPFAM" id="SSF143243">
    <property type="entry name" value="Nqo5-like"/>
    <property type="match status" value="1"/>
</dbReference>
<dbReference type="PROSITE" id="PS00535">
    <property type="entry name" value="COMPLEX1_49K"/>
    <property type="match status" value="1"/>
</dbReference>
<gene>
    <name evidence="1" type="primary">nuoC</name>
    <name evidence="1" type="synonym">nuoCD</name>
    <name evidence="1" type="synonym">nuoD</name>
    <name type="ordered locus">bbp_145</name>
</gene>
<sequence length="597" mass="69110">MKKEIKRDDVNVIEKDFGNNNSIILKLFKKFGEDSFFIQTTVTDIIVLWIDGSLLLALAKFLLTINNPYNMLFDLYGIDERMRLYKHNLPLSHFSVVYHFISINRNSDIILKIALLEEKLSLPTLTKLYPNANWYEREIWDMFGISFENHPNLIRILMPKTWVGHPLRKDHPARATEFDPYVLNKYKEDIEMEALKFKPEEWGMKKNKQSKYMFLNLGPNHPSAHGAFRIILQLDGEEIVDCVPDIGYHHRGAEKMGERQTWHNYIPYTDRVEYLGGCINEMPYVLAVERLAGIEVSQRIEVIRIMLSELFRINSHLLFISTFIQDVGAMTPVFLAFTDRQKIYDLIELITGSRMHPAWFRIGGLAHDLPKGWNALLKEFLLWMPKRLLKYINVALKNSILISRSKGIAEYNKHDALLWGVTGAGLRATGINFDVRKKRPYSGYQNFDFEVPIGAGISDCYSRVMLKLEEIWQSLAILKQCLENMPEGPFKMDHPNTTPPHKVRTLQHIETMISHFLKVSWGPVLSSNESFKMVEATKGINSYYLISDGNTMSYRTRIRTPSFPHLQQIPSVIRGNLISDLIAYLGSIDFVMSDVDR</sequence>
<organism>
    <name type="scientific">Buchnera aphidicola subsp. Baizongia pistaciae (strain Bp)</name>
    <dbReference type="NCBI Taxonomy" id="224915"/>
    <lineage>
        <taxon>Bacteria</taxon>
        <taxon>Pseudomonadati</taxon>
        <taxon>Pseudomonadota</taxon>
        <taxon>Gammaproteobacteria</taxon>
        <taxon>Enterobacterales</taxon>
        <taxon>Erwiniaceae</taxon>
        <taxon>Buchnera</taxon>
    </lineage>
</organism>
<feature type="chain" id="PRO_0000118683" description="NADH-quinone oxidoreductase subunit C/D">
    <location>
        <begin position="1"/>
        <end position="597"/>
    </location>
</feature>
<feature type="region of interest" description="NADH dehydrogenase I subunit C" evidence="1">
    <location>
        <begin position="1"/>
        <end position="188"/>
    </location>
</feature>
<feature type="region of interest" description="NADH dehydrogenase I subunit D" evidence="1">
    <location>
        <begin position="211"/>
        <end position="597"/>
    </location>
</feature>
<keyword id="KW-0997">Cell inner membrane</keyword>
<keyword id="KW-1003">Cell membrane</keyword>
<keyword id="KW-0472">Membrane</keyword>
<keyword id="KW-0511">Multifunctional enzyme</keyword>
<keyword id="KW-0520">NAD</keyword>
<keyword id="KW-0874">Quinone</keyword>
<keyword id="KW-1185">Reference proteome</keyword>
<keyword id="KW-1278">Translocase</keyword>
<keyword id="KW-0813">Transport</keyword>
<keyword id="KW-0830">Ubiquinone</keyword>
<evidence type="ECO:0000255" key="1">
    <source>
        <dbReference type="HAMAP-Rule" id="MF_01359"/>
    </source>
</evidence>
<proteinExistence type="inferred from homology"/>
<name>NUOCD_BUCBP</name>
<comment type="function">
    <text evidence="1">NDH-1 shuttles electrons from NADH, via FMN and iron-sulfur (Fe-S) centers, to quinones in the respiratory chain. The immediate electron acceptor for the enzyme in this species is believed to be ubiquinone. Couples the redox reaction to proton translocation (for every two electrons transferred, four hydrogen ions are translocated across the cytoplasmic membrane), and thus conserves the redox energy in a proton gradient.</text>
</comment>
<comment type="catalytic activity">
    <reaction evidence="1">
        <text>a quinone + NADH + 5 H(+)(in) = a quinol + NAD(+) + 4 H(+)(out)</text>
        <dbReference type="Rhea" id="RHEA:57888"/>
        <dbReference type="ChEBI" id="CHEBI:15378"/>
        <dbReference type="ChEBI" id="CHEBI:24646"/>
        <dbReference type="ChEBI" id="CHEBI:57540"/>
        <dbReference type="ChEBI" id="CHEBI:57945"/>
        <dbReference type="ChEBI" id="CHEBI:132124"/>
    </reaction>
</comment>
<comment type="subunit">
    <text evidence="1">NDH-1 is composed of 13 different subunits. Subunits NuoB, CD, E, F, and G constitute the peripheral sector of the complex.</text>
</comment>
<comment type="subcellular location">
    <subcellularLocation>
        <location evidence="1">Cell inner membrane</location>
        <topology evidence="1">Peripheral membrane protein</topology>
        <orientation evidence="1">Cytoplasmic side</orientation>
    </subcellularLocation>
</comment>
<comment type="similarity">
    <text evidence="1">In the N-terminal section; belongs to the complex I 30 kDa subunit family.</text>
</comment>
<comment type="similarity">
    <text evidence="1">In the C-terminal section; belongs to the complex I 49 kDa subunit family.</text>
</comment>